<sequence length="313" mass="34678">MKKQLIIGTRSSPLALWQAEYTKAELSRHFPDLDITLKLVKTTGDVLLDSPLSKIGDMGLFTKDIEKFLIAKEIDLAVHSLKDVPTATPEGLIISAFTEREDTRDVIISKNGVKMLDLPKNAKVATSSLRRMSQLKSLRPDFDIKDIRGNLNTRFQKFDEGEFDAMMLAYAGVYRLNFSDRISEILPHEIMLPAVGQGALGIETRVDDEQTREIVKVMNHSNTEYCCKAERSLLRHLQGGCQIPIGSYASFKNGTLHLLAFVGSVDGTKGIRNEITKTGLTSPAQAEAAGIELAEELLKQGAEEILSEIRKTC</sequence>
<accession>A4SFJ8</accession>
<dbReference type="EC" id="2.5.1.61" evidence="1"/>
<dbReference type="EMBL" id="CP000607">
    <property type="protein sequence ID" value="ABP37257.1"/>
    <property type="molecule type" value="Genomic_DNA"/>
</dbReference>
<dbReference type="SMR" id="A4SFJ8"/>
<dbReference type="STRING" id="290318.Cvib_1245"/>
<dbReference type="KEGG" id="pvi:Cvib_1245"/>
<dbReference type="eggNOG" id="COG0181">
    <property type="taxonomic scope" value="Bacteria"/>
</dbReference>
<dbReference type="HOGENOM" id="CLU_019704_0_2_10"/>
<dbReference type="OrthoDB" id="9810298at2"/>
<dbReference type="UniPathway" id="UPA00251">
    <property type="reaction ID" value="UER00319"/>
</dbReference>
<dbReference type="UniPathway" id="UPA00668"/>
<dbReference type="GO" id="GO:0005737">
    <property type="term" value="C:cytoplasm"/>
    <property type="evidence" value="ECO:0007669"/>
    <property type="project" value="TreeGrafter"/>
</dbReference>
<dbReference type="GO" id="GO:0004418">
    <property type="term" value="F:hydroxymethylbilane synthase activity"/>
    <property type="evidence" value="ECO:0007669"/>
    <property type="project" value="UniProtKB-UniRule"/>
</dbReference>
<dbReference type="GO" id="GO:0015995">
    <property type="term" value="P:chlorophyll biosynthetic process"/>
    <property type="evidence" value="ECO:0007669"/>
    <property type="project" value="UniProtKB-UniPathway"/>
</dbReference>
<dbReference type="GO" id="GO:0006782">
    <property type="term" value="P:protoporphyrinogen IX biosynthetic process"/>
    <property type="evidence" value="ECO:0007669"/>
    <property type="project" value="UniProtKB-UniRule"/>
</dbReference>
<dbReference type="CDD" id="cd13646">
    <property type="entry name" value="PBP2_EcHMBS_like"/>
    <property type="match status" value="1"/>
</dbReference>
<dbReference type="FunFam" id="3.30.160.40:FF:000002">
    <property type="entry name" value="Porphobilinogen deaminase"/>
    <property type="match status" value="1"/>
</dbReference>
<dbReference type="FunFam" id="3.40.190.10:FF:000004">
    <property type="entry name" value="Porphobilinogen deaminase"/>
    <property type="match status" value="1"/>
</dbReference>
<dbReference type="FunFam" id="3.40.190.10:FF:000005">
    <property type="entry name" value="Porphobilinogen deaminase"/>
    <property type="match status" value="1"/>
</dbReference>
<dbReference type="Gene3D" id="3.40.190.10">
    <property type="entry name" value="Periplasmic binding protein-like II"/>
    <property type="match status" value="2"/>
</dbReference>
<dbReference type="Gene3D" id="3.30.160.40">
    <property type="entry name" value="Porphobilinogen deaminase, C-terminal domain"/>
    <property type="match status" value="1"/>
</dbReference>
<dbReference type="HAMAP" id="MF_00260">
    <property type="entry name" value="Porphobil_deam"/>
    <property type="match status" value="1"/>
</dbReference>
<dbReference type="InterPro" id="IPR000860">
    <property type="entry name" value="HemC"/>
</dbReference>
<dbReference type="InterPro" id="IPR022419">
    <property type="entry name" value="Porphobilin_deaminase_cofac_BS"/>
</dbReference>
<dbReference type="InterPro" id="IPR022417">
    <property type="entry name" value="Porphobilin_deaminase_N"/>
</dbReference>
<dbReference type="InterPro" id="IPR022418">
    <property type="entry name" value="Porphobilinogen_deaminase_C"/>
</dbReference>
<dbReference type="InterPro" id="IPR036803">
    <property type="entry name" value="Porphobilinogen_deaminase_C_sf"/>
</dbReference>
<dbReference type="NCBIfam" id="TIGR00212">
    <property type="entry name" value="hemC"/>
    <property type="match status" value="1"/>
</dbReference>
<dbReference type="PANTHER" id="PTHR11557">
    <property type="entry name" value="PORPHOBILINOGEN DEAMINASE"/>
    <property type="match status" value="1"/>
</dbReference>
<dbReference type="PANTHER" id="PTHR11557:SF0">
    <property type="entry name" value="PORPHOBILINOGEN DEAMINASE"/>
    <property type="match status" value="1"/>
</dbReference>
<dbReference type="Pfam" id="PF01379">
    <property type="entry name" value="Porphobil_deam"/>
    <property type="match status" value="1"/>
</dbReference>
<dbReference type="Pfam" id="PF03900">
    <property type="entry name" value="Porphobil_deamC"/>
    <property type="match status" value="1"/>
</dbReference>
<dbReference type="PIRSF" id="PIRSF001438">
    <property type="entry name" value="4pyrrol_synth_OHMeBilane_synth"/>
    <property type="match status" value="1"/>
</dbReference>
<dbReference type="PRINTS" id="PR00151">
    <property type="entry name" value="PORPHBDMNASE"/>
</dbReference>
<dbReference type="SUPFAM" id="SSF53850">
    <property type="entry name" value="Periplasmic binding protein-like II"/>
    <property type="match status" value="1"/>
</dbReference>
<dbReference type="SUPFAM" id="SSF54782">
    <property type="entry name" value="Porphobilinogen deaminase (hydroxymethylbilane synthase), C-terminal domain"/>
    <property type="match status" value="1"/>
</dbReference>
<dbReference type="PROSITE" id="PS00533">
    <property type="entry name" value="PORPHOBILINOGEN_DEAM"/>
    <property type="match status" value="1"/>
</dbReference>
<protein>
    <recommendedName>
        <fullName evidence="1">Porphobilinogen deaminase</fullName>
        <shortName evidence="1">PBG</shortName>
        <ecNumber evidence="1">2.5.1.61</ecNumber>
    </recommendedName>
    <alternativeName>
        <fullName evidence="1">Hydroxymethylbilane synthase</fullName>
        <shortName evidence="1">HMBS</shortName>
    </alternativeName>
    <alternativeName>
        <fullName evidence="1">Pre-uroporphyrinogen synthase</fullName>
    </alternativeName>
</protein>
<gene>
    <name evidence="1" type="primary">hemC</name>
    <name type="ordered locus">Cvib_1245</name>
</gene>
<reference key="1">
    <citation type="submission" date="2007-03" db="EMBL/GenBank/DDBJ databases">
        <title>Complete sequence of Prosthecochloris vibrioformis DSM 265.</title>
        <authorList>
            <consortium name="US DOE Joint Genome Institute"/>
            <person name="Copeland A."/>
            <person name="Lucas S."/>
            <person name="Lapidus A."/>
            <person name="Barry K."/>
            <person name="Detter J.C."/>
            <person name="Glavina del Rio T."/>
            <person name="Hammon N."/>
            <person name="Israni S."/>
            <person name="Pitluck S."/>
            <person name="Schmutz J."/>
            <person name="Larimer F."/>
            <person name="Land M."/>
            <person name="Hauser L."/>
            <person name="Mikhailova N."/>
            <person name="Li T."/>
            <person name="Overmann J."/>
            <person name="Schuster S.C."/>
            <person name="Bryant D.A."/>
            <person name="Richardson P."/>
        </authorList>
    </citation>
    <scope>NUCLEOTIDE SEQUENCE [LARGE SCALE GENOMIC DNA]</scope>
    <source>
        <strain>DSM 265 / 1930</strain>
    </source>
</reference>
<keyword id="KW-0149">Chlorophyll biosynthesis</keyword>
<keyword id="KW-0627">Porphyrin biosynthesis</keyword>
<keyword id="KW-0808">Transferase</keyword>
<proteinExistence type="inferred from homology"/>
<comment type="function">
    <text evidence="1">Tetrapolymerization of the monopyrrole PBG into the hydroxymethylbilane pre-uroporphyrinogen in several discrete steps.</text>
</comment>
<comment type="catalytic activity">
    <reaction evidence="1">
        <text>4 porphobilinogen + H2O = hydroxymethylbilane + 4 NH4(+)</text>
        <dbReference type="Rhea" id="RHEA:13185"/>
        <dbReference type="ChEBI" id="CHEBI:15377"/>
        <dbReference type="ChEBI" id="CHEBI:28938"/>
        <dbReference type="ChEBI" id="CHEBI:57845"/>
        <dbReference type="ChEBI" id="CHEBI:58126"/>
        <dbReference type="EC" id="2.5.1.61"/>
    </reaction>
</comment>
<comment type="cofactor">
    <cofactor evidence="1">
        <name>dipyrromethane</name>
        <dbReference type="ChEBI" id="CHEBI:60342"/>
    </cofactor>
    <text evidence="1">Binds 1 dipyrromethane group covalently.</text>
</comment>
<comment type="pathway">
    <text evidence="1">Porphyrin-containing compound metabolism; protoporphyrin-IX biosynthesis; coproporphyrinogen-III from 5-aminolevulinate: step 2/4.</text>
</comment>
<comment type="pathway">
    <text evidence="1">Porphyrin-containing compound metabolism; chlorophyll biosynthesis.</text>
</comment>
<comment type="subunit">
    <text evidence="1">Monomer.</text>
</comment>
<comment type="miscellaneous">
    <text evidence="1">The porphobilinogen subunits are added to the dipyrromethane group.</text>
</comment>
<comment type="similarity">
    <text evidence="1">Belongs to the HMBS family.</text>
</comment>
<organism>
    <name type="scientific">Chlorobium phaeovibrioides (strain DSM 265 / 1930)</name>
    <name type="common">Prosthecochloris vibrioformis (strain DSM 265)</name>
    <dbReference type="NCBI Taxonomy" id="290318"/>
    <lineage>
        <taxon>Bacteria</taxon>
        <taxon>Pseudomonadati</taxon>
        <taxon>Chlorobiota</taxon>
        <taxon>Chlorobiia</taxon>
        <taxon>Chlorobiales</taxon>
        <taxon>Chlorobiaceae</taxon>
        <taxon>Chlorobium/Pelodictyon group</taxon>
        <taxon>Chlorobium</taxon>
    </lineage>
</organism>
<feature type="chain" id="PRO_1000078614" description="Porphobilinogen deaminase">
    <location>
        <begin position="1"/>
        <end position="313"/>
    </location>
</feature>
<feature type="modified residue" description="S-(dipyrrolylmethanemethyl)cysteine" evidence="1">
    <location>
        <position position="241"/>
    </location>
</feature>
<name>HEM3_CHLPM</name>
<evidence type="ECO:0000255" key="1">
    <source>
        <dbReference type="HAMAP-Rule" id="MF_00260"/>
    </source>
</evidence>